<gene>
    <name evidence="3" type="primary">RPL3</name>
    <name type="ordered locus">orf19.1601</name>
    <name type="ORF">CAALFM_C209430WA</name>
</gene>
<proteinExistence type="evidence at protein level"/>
<evidence type="ECO:0000250" key="1">
    <source>
        <dbReference type="UniProtKB" id="P14126"/>
    </source>
</evidence>
<evidence type="ECO:0000269" key="2">
    <source>
    </source>
</evidence>
<evidence type="ECO:0000303" key="3">
    <source>
    </source>
</evidence>
<evidence type="ECO:0000305" key="4"/>
<evidence type="ECO:0000305" key="5">
    <source>
    </source>
</evidence>
<evidence type="ECO:0007744" key="6">
    <source>
        <dbReference type="PDB" id="7PZY"/>
    </source>
</evidence>
<evidence type="ECO:0007744" key="7">
    <source>
        <dbReference type="PDB" id="7Q0F"/>
    </source>
</evidence>
<evidence type="ECO:0007744" key="8">
    <source>
        <dbReference type="PDB" id="7Q0P"/>
    </source>
</evidence>
<dbReference type="EMBL" id="CP017624">
    <property type="protein sequence ID" value="AOW27925.1"/>
    <property type="molecule type" value="Genomic_DNA"/>
</dbReference>
<dbReference type="RefSeq" id="XP_710682.1">
    <property type="nucleotide sequence ID" value="XM_705590.2"/>
</dbReference>
<dbReference type="PDB" id="7PZY">
    <property type="method" value="EM"/>
    <property type="resolution" value="2.32 A"/>
    <property type="chains" value="k=1-389"/>
</dbReference>
<dbReference type="PDB" id="7Q08">
    <property type="method" value="EM"/>
    <property type="resolution" value="2.56 A"/>
    <property type="chains" value="k=1-389"/>
</dbReference>
<dbReference type="PDB" id="7Q0F">
    <property type="method" value="EM"/>
    <property type="resolution" value="2.64 A"/>
    <property type="chains" value="k=1-389"/>
</dbReference>
<dbReference type="PDB" id="7Q0P">
    <property type="method" value="EM"/>
    <property type="resolution" value="2.77 A"/>
    <property type="chains" value="k=1-389"/>
</dbReference>
<dbReference type="PDB" id="7Q0R">
    <property type="method" value="EM"/>
    <property type="resolution" value="2.67 A"/>
    <property type="chains" value="k=1-389"/>
</dbReference>
<dbReference type="PDB" id="8C3A">
    <property type="method" value="X-ray"/>
    <property type="resolution" value="3.00 A"/>
    <property type="chains" value="AX/k=1-389"/>
</dbReference>
<dbReference type="PDB" id="8CQ7">
    <property type="method" value="X-ray"/>
    <property type="resolution" value="3.20 A"/>
    <property type="chains" value="AX/k=1-389"/>
</dbReference>
<dbReference type="PDB" id="8CQW">
    <property type="method" value="X-ray"/>
    <property type="resolution" value="3.05 A"/>
    <property type="chains" value="AX/k=1-389"/>
</dbReference>
<dbReference type="PDB" id="8CRE">
    <property type="method" value="X-ray"/>
    <property type="resolution" value="3.00 A"/>
    <property type="chains" value="AX/k=1-389"/>
</dbReference>
<dbReference type="PDB" id="8OEQ">
    <property type="method" value="X-ray"/>
    <property type="resolution" value="3.30 A"/>
    <property type="chains" value="AX/k=1-389"/>
</dbReference>
<dbReference type="PDB" id="8OGJ">
    <property type="method" value="EM"/>
    <property type="resolution" value="3.10 A"/>
    <property type="chains" value="k=1-389"/>
</dbReference>
<dbReference type="PDB" id="8OH6">
    <property type="method" value="X-ray"/>
    <property type="resolution" value="3.35 A"/>
    <property type="chains" value="AX/k=1-389"/>
</dbReference>
<dbReference type="PDB" id="8OI5">
    <property type="method" value="X-ray"/>
    <property type="resolution" value="2.90 A"/>
    <property type="chains" value="AX/k=1-389"/>
</dbReference>
<dbReference type="PDB" id="8OJ3">
    <property type="method" value="X-ray"/>
    <property type="resolution" value="3.50 A"/>
    <property type="chains" value="AX/k=1-389"/>
</dbReference>
<dbReference type="PDB" id="8Q5I">
    <property type="method" value="EM"/>
    <property type="resolution" value="2.45 A"/>
    <property type="chains" value="k=1-389"/>
</dbReference>
<dbReference type="PDBsum" id="7PZY"/>
<dbReference type="PDBsum" id="7Q08"/>
<dbReference type="PDBsum" id="7Q0F"/>
<dbReference type="PDBsum" id="7Q0P"/>
<dbReference type="PDBsum" id="7Q0R"/>
<dbReference type="PDBsum" id="8C3A"/>
<dbReference type="PDBsum" id="8CQ7"/>
<dbReference type="PDBsum" id="8CQW"/>
<dbReference type="PDBsum" id="8CRE"/>
<dbReference type="PDBsum" id="8OEQ"/>
<dbReference type="PDBsum" id="8OGJ"/>
<dbReference type="PDBsum" id="8OH6"/>
<dbReference type="PDBsum" id="8OI5"/>
<dbReference type="PDBsum" id="8OJ3"/>
<dbReference type="PDBsum" id="8Q5I"/>
<dbReference type="EMDB" id="EMD-13737"/>
<dbReference type="EMDB" id="EMD-13741"/>
<dbReference type="EMDB" id="EMD-13744"/>
<dbReference type="EMDB" id="EMD-13749"/>
<dbReference type="EMDB" id="EMD-13750"/>
<dbReference type="EMDB" id="EMD-16874"/>
<dbReference type="SMR" id="Q59LS1"/>
<dbReference type="FunCoup" id="Q59LS1">
    <property type="interactions" value="864"/>
</dbReference>
<dbReference type="STRING" id="237561.Q59LS1"/>
<dbReference type="EnsemblFungi" id="C2_09430W_A-T">
    <property type="protein sequence ID" value="C2_09430W_A-T-p1"/>
    <property type="gene ID" value="C2_09430W_A"/>
</dbReference>
<dbReference type="GeneID" id="3647719"/>
<dbReference type="KEGG" id="cal:CAALFM_C209430WA"/>
<dbReference type="CGD" id="CAL0000201023">
    <property type="gene designation" value="RPL3"/>
</dbReference>
<dbReference type="VEuPathDB" id="FungiDB:C2_09430W_A"/>
<dbReference type="eggNOG" id="KOG0746">
    <property type="taxonomic scope" value="Eukaryota"/>
</dbReference>
<dbReference type="HOGENOM" id="CLU_033361_2_1_1"/>
<dbReference type="InParanoid" id="Q59LS1"/>
<dbReference type="OMA" id="QRTEYNK"/>
<dbReference type="OrthoDB" id="1611972at2759"/>
<dbReference type="Proteomes" id="UP000000559">
    <property type="component" value="Chromosome 2"/>
</dbReference>
<dbReference type="GO" id="GO:0009986">
    <property type="term" value="C:cell surface"/>
    <property type="evidence" value="ECO:0000314"/>
    <property type="project" value="CGD"/>
</dbReference>
<dbReference type="GO" id="GO:0022625">
    <property type="term" value="C:cytosolic large ribosomal subunit"/>
    <property type="evidence" value="ECO:0000318"/>
    <property type="project" value="GO_Central"/>
</dbReference>
<dbReference type="GO" id="GO:0032040">
    <property type="term" value="C:small-subunit processome"/>
    <property type="evidence" value="ECO:0000314"/>
    <property type="project" value="CGD"/>
</dbReference>
<dbReference type="GO" id="GO:0003723">
    <property type="term" value="F:RNA binding"/>
    <property type="evidence" value="ECO:0000318"/>
    <property type="project" value="GO_Central"/>
</dbReference>
<dbReference type="GO" id="GO:0003735">
    <property type="term" value="F:structural constituent of ribosome"/>
    <property type="evidence" value="ECO:0000318"/>
    <property type="project" value="GO_Central"/>
</dbReference>
<dbReference type="GO" id="GO:1990145">
    <property type="term" value="P:maintenance of translational fidelity"/>
    <property type="evidence" value="ECO:0007669"/>
    <property type="project" value="EnsemblFungi"/>
</dbReference>
<dbReference type="GO" id="GO:0000027">
    <property type="term" value="P:ribosomal large subunit assembly"/>
    <property type="evidence" value="ECO:0007669"/>
    <property type="project" value="EnsemblFungi"/>
</dbReference>
<dbReference type="GO" id="GO:0006364">
    <property type="term" value="P:rRNA processing"/>
    <property type="evidence" value="ECO:0007669"/>
    <property type="project" value="EnsemblFungi"/>
</dbReference>
<dbReference type="GO" id="GO:0006412">
    <property type="term" value="P:translation"/>
    <property type="evidence" value="ECO:0000318"/>
    <property type="project" value="GO_Central"/>
</dbReference>
<dbReference type="GO" id="GO:0006414">
    <property type="term" value="P:translational elongation"/>
    <property type="evidence" value="ECO:0007669"/>
    <property type="project" value="EnsemblFungi"/>
</dbReference>
<dbReference type="FunFam" id="2.40.30.10:FF:000079">
    <property type="entry name" value="60S ribosomal protein L3"/>
    <property type="match status" value="1"/>
</dbReference>
<dbReference type="FunFam" id="3.30.1430.10:FF:000001">
    <property type="entry name" value="60S ribosomal protein L3"/>
    <property type="match status" value="1"/>
</dbReference>
<dbReference type="FunFam" id="4.10.960.10:FF:000002">
    <property type="entry name" value="60S ribosomal protein L3"/>
    <property type="match status" value="1"/>
</dbReference>
<dbReference type="FunFam" id="2.40.30.10:FF:000351">
    <property type="entry name" value="Ribosomal protein L3"/>
    <property type="match status" value="1"/>
</dbReference>
<dbReference type="Gene3D" id="3.30.1430.10">
    <property type="match status" value="1"/>
</dbReference>
<dbReference type="Gene3D" id="4.10.960.10">
    <property type="entry name" value="Ribosomal protein L3, domain 3"/>
    <property type="match status" value="1"/>
</dbReference>
<dbReference type="Gene3D" id="2.40.30.10">
    <property type="entry name" value="Translation factors"/>
    <property type="match status" value="1"/>
</dbReference>
<dbReference type="InterPro" id="IPR045077">
    <property type="entry name" value="L3_arc_euk"/>
</dbReference>
<dbReference type="InterPro" id="IPR044892">
    <property type="entry name" value="Ribosomal_L3_dom_3_arc_sf"/>
</dbReference>
<dbReference type="InterPro" id="IPR000597">
    <property type="entry name" value="Ribosomal_uL3"/>
</dbReference>
<dbReference type="InterPro" id="IPR019926">
    <property type="entry name" value="Ribosomal_uL3_CS"/>
</dbReference>
<dbReference type="InterPro" id="IPR009000">
    <property type="entry name" value="Transl_B-barrel_sf"/>
</dbReference>
<dbReference type="PANTHER" id="PTHR11363">
    <property type="entry name" value="60S RIBOSOMAL PROTEIN L3-RELATED"/>
    <property type="match status" value="1"/>
</dbReference>
<dbReference type="PANTHER" id="PTHR11363:SF5">
    <property type="entry name" value="LARGE RIBOSOMAL SUBUNIT PROTEIN UL3"/>
    <property type="match status" value="1"/>
</dbReference>
<dbReference type="Pfam" id="PF00297">
    <property type="entry name" value="Ribosomal_L3"/>
    <property type="match status" value="1"/>
</dbReference>
<dbReference type="SUPFAM" id="SSF50447">
    <property type="entry name" value="Translation proteins"/>
    <property type="match status" value="1"/>
</dbReference>
<dbReference type="PROSITE" id="PS00474">
    <property type="entry name" value="RIBOSOMAL_L3"/>
    <property type="match status" value="1"/>
</dbReference>
<organism>
    <name type="scientific">Candida albicans (strain SC5314 / ATCC MYA-2876)</name>
    <name type="common">Yeast</name>
    <dbReference type="NCBI Taxonomy" id="237561"/>
    <lineage>
        <taxon>Eukaryota</taxon>
        <taxon>Fungi</taxon>
        <taxon>Dikarya</taxon>
        <taxon>Ascomycota</taxon>
        <taxon>Saccharomycotina</taxon>
        <taxon>Pichiomycetes</taxon>
        <taxon>Debaryomycetaceae</taxon>
        <taxon>Candida/Lodderomyces clade</taxon>
        <taxon>Candida</taxon>
    </lineage>
</organism>
<protein>
    <recommendedName>
        <fullName evidence="3">Large ribosomal subunit protein uL3</fullName>
    </recommendedName>
    <alternativeName>
        <fullName>60S ribosomal protein L3</fullName>
    </alternativeName>
</protein>
<reference key="1">
    <citation type="journal article" date="2004" name="Proc. Natl. Acad. Sci. U.S.A.">
        <title>The diploid genome sequence of Candida albicans.</title>
        <authorList>
            <person name="Jones T."/>
            <person name="Federspiel N.A."/>
            <person name="Chibana H."/>
            <person name="Dungan J."/>
            <person name="Kalman S."/>
            <person name="Magee B.B."/>
            <person name="Newport G."/>
            <person name="Thorstenson Y.R."/>
            <person name="Agabian N."/>
            <person name="Magee P.T."/>
            <person name="Davis R.W."/>
            <person name="Scherer S."/>
        </authorList>
    </citation>
    <scope>NUCLEOTIDE SEQUENCE [LARGE SCALE GENOMIC DNA]</scope>
    <source>
        <strain>SC5314 / ATCC MYA-2876</strain>
    </source>
</reference>
<reference key="2">
    <citation type="journal article" date="2007" name="Genome Biol.">
        <title>Assembly of the Candida albicans genome into sixteen supercontigs aligned on the eight chromosomes.</title>
        <authorList>
            <person name="van het Hoog M."/>
            <person name="Rast T.J."/>
            <person name="Martchenko M."/>
            <person name="Grindle S."/>
            <person name="Dignard D."/>
            <person name="Hogues H."/>
            <person name="Cuomo C."/>
            <person name="Berriman M."/>
            <person name="Scherer S."/>
            <person name="Magee B.B."/>
            <person name="Whiteway M."/>
            <person name="Chibana H."/>
            <person name="Nantel A."/>
            <person name="Magee P.T."/>
        </authorList>
    </citation>
    <scope>GENOME REANNOTATION</scope>
    <source>
        <strain>SC5314 / ATCC MYA-2876</strain>
    </source>
</reference>
<reference key="3">
    <citation type="journal article" date="2013" name="Genome Biol.">
        <title>Assembly of a phased diploid Candida albicans genome facilitates allele-specific measurements and provides a simple model for repeat and indel structure.</title>
        <authorList>
            <person name="Muzzey D."/>
            <person name="Schwartz K."/>
            <person name="Weissman J.S."/>
            <person name="Sherlock G."/>
        </authorList>
    </citation>
    <scope>NUCLEOTIDE SEQUENCE [LARGE SCALE GENOMIC DNA]</scope>
    <scope>GENOME REANNOTATION</scope>
    <source>
        <strain>SC5314 / ATCC MYA-2876</strain>
    </source>
</reference>
<reference evidence="6 7 8" key="4">
    <citation type="journal article" date="2022" name="Sci. Adv.">
        <title>E-site drug specificity of the human pathogen Candida albicans ribosome.</title>
        <authorList>
            <person name="Zgadzay Y."/>
            <person name="Kolosova O."/>
            <person name="Stetsenko A."/>
            <person name="Wu C."/>
            <person name="Bruchlen D."/>
            <person name="Usachev K."/>
            <person name="Validov S."/>
            <person name="Jenner L."/>
            <person name="Rogachev A."/>
            <person name="Yusupova G."/>
            <person name="Sachs M.S."/>
            <person name="Guskov A."/>
            <person name="Yusupov M."/>
        </authorList>
    </citation>
    <scope>STRUCTURE BY ELECTRON MICROSCOPY (2.32 ANGSTROMS) OF THE 80S RIBOSOME</scope>
    <scope>SUBUNIT</scope>
</reference>
<accession>Q59LS1</accession>
<sequence>MSHRKYEAPRHGSLGFLPRKRAAKQRGRVKSFPKDVKSKPVALTAFLGYKAGMTTIVRDLDRPGSKMHKREVVEAATVVDTPPMVVVGVVGYVETPRGLRSLTTVWAEHLSEEVRRRFYKNWYKSKKKAFTKYSGKYATDAKQVETELARIKKYASVVRVLAHTQIKKTPLSQKKAHLAEIQINGGSVSDKVDWAKEHFEKEVSVDSVFEQDEMIDVIAVTKGHGFEGVTHRWGTKKLPRKTHRGLRKVACIGAWHPANVNWTVARAGQNGYHHRTSINHKVYRVGKGTDEANGATEFDRTKKTINPMGGFVRYGNVNNDFVLLKGSIPGVKKRVVTLRKSLYVDTSRRAVEKVNLKWIDTASRFGKGRFQTPAEKHAFMGTLKKDLEN</sequence>
<feature type="chain" id="PRO_0000456488" description="Large ribosomal subunit protein uL3">
    <location>
        <begin position="1"/>
        <end position="389"/>
    </location>
</feature>
<comment type="function">
    <text evidence="1 5">Component of the ribosome, a large ribonucleoprotein complex responsible for the synthesis of proteins in the cell. The small ribosomal subunit (SSU) binds messenger RNAs (mRNAs) and translates the encoded message by selecting cognate aminoacyl-transfer RNA (tRNA) molecules. The large subunit (LSU) contains the ribosomal catalytic site termed the peptidyl transferase center (PTC), which catalyzes the formation of peptide bonds, thereby polymerizing the amino acids delivered by tRNAs into a polypeptide chain. The nascent polypeptides leave the ribosome through a tunnel in the LSU and interact with protein factors that function in enzymatic processing, targeting, and the membrane insertion of nascent chains at the exit of the ribosomal tunnel (Probable). RPL3 plays a role in coordinating processes of accommodating the aminoacyl-tRNA in the PTC (By similarity).</text>
</comment>
<comment type="subunit">
    <text evidence="2">Component of the large ribosomal subunit (PubMed:35613268). Mature ribosomes consist of a small (40S) and a large (60S) subunit (PubMed:35613268). The 40S subunit contains about 32 different proteins and 1 molecule of RNA (18S) (PubMed:35613268). The 60S subunit contains 45 different proteins and 3 molecules of RNA (25S, 5.8S and 5S) (PubMed:35613268).</text>
</comment>
<comment type="subcellular location">
    <subcellularLocation>
        <location evidence="5">Cytoplasm</location>
    </subcellularLocation>
</comment>
<comment type="similarity">
    <text evidence="4">Belongs to the universal ribosomal protein uL3 family.</text>
</comment>
<name>RL3_CANAL</name>
<keyword id="KW-0002">3D-structure</keyword>
<keyword id="KW-0963">Cytoplasm</keyword>
<keyword id="KW-1185">Reference proteome</keyword>
<keyword id="KW-0687">Ribonucleoprotein</keyword>
<keyword id="KW-0689">Ribosomal protein</keyword>